<evidence type="ECO:0000255" key="1">
    <source>
        <dbReference type="HAMAP-Rule" id="MF_00083"/>
    </source>
</evidence>
<evidence type="ECO:0000269" key="2">
    <source>
    </source>
</evidence>
<evidence type="ECO:0000269" key="3">
    <source>
    </source>
</evidence>
<evidence type="ECO:0000269" key="4">
    <source>
    </source>
</evidence>
<evidence type="ECO:0000269" key="5">
    <source>
    </source>
</evidence>
<evidence type="ECO:0000269" key="6">
    <source>
    </source>
</evidence>
<evidence type="ECO:0000303" key="7">
    <source>
    </source>
</evidence>
<evidence type="ECO:0000305" key="8">
    <source>
    </source>
</evidence>
<evidence type="ECO:0000305" key="9">
    <source>
    </source>
</evidence>
<evidence type="ECO:0007744" key="10">
    <source>
        <dbReference type="PDB" id="2Z2I"/>
    </source>
</evidence>
<evidence type="ECO:0007744" key="11">
    <source>
        <dbReference type="PDB" id="2Z2J"/>
    </source>
</evidence>
<evidence type="ECO:0007744" key="12">
    <source>
        <dbReference type="PDB" id="2Z2K"/>
    </source>
</evidence>
<evidence type="ECO:0007744" key="13">
    <source>
        <dbReference type="PDB" id="3TCK"/>
    </source>
</evidence>
<evidence type="ECO:0007744" key="14">
    <source>
        <dbReference type="PDB" id="3TCN"/>
    </source>
</evidence>
<evidence type="ECO:0007744" key="15">
    <source>
        <dbReference type="PDB" id="3TD2"/>
    </source>
</evidence>
<evidence type="ECO:0007744" key="16">
    <source>
        <dbReference type="PDB" id="3TD6"/>
    </source>
</evidence>
<evidence type="ECO:0007829" key="17">
    <source>
        <dbReference type="PDB" id="2JRC"/>
    </source>
</evidence>
<evidence type="ECO:0007829" key="18">
    <source>
        <dbReference type="PDB" id="7WT6"/>
    </source>
</evidence>
<reference key="1">
    <citation type="journal article" date="1998" name="Nature">
        <title>Deciphering the biology of Mycobacterium tuberculosis from the complete genome sequence.</title>
        <authorList>
            <person name="Cole S.T."/>
            <person name="Brosch R."/>
            <person name="Parkhill J."/>
            <person name="Garnier T."/>
            <person name="Churcher C.M."/>
            <person name="Harris D.E."/>
            <person name="Gordon S.V."/>
            <person name="Eiglmeier K."/>
            <person name="Gas S."/>
            <person name="Barry C.E. III"/>
            <person name="Tekaia F."/>
            <person name="Badcock K."/>
            <person name="Basham D."/>
            <person name="Brown D."/>
            <person name="Chillingworth T."/>
            <person name="Connor R."/>
            <person name="Davies R.M."/>
            <person name="Devlin K."/>
            <person name="Feltwell T."/>
            <person name="Gentles S."/>
            <person name="Hamlin N."/>
            <person name="Holroyd S."/>
            <person name="Hornsby T."/>
            <person name="Jagels K."/>
            <person name="Krogh A."/>
            <person name="McLean J."/>
            <person name="Moule S."/>
            <person name="Murphy L.D."/>
            <person name="Oliver S."/>
            <person name="Osborne J."/>
            <person name="Quail M.A."/>
            <person name="Rajandream M.A."/>
            <person name="Rogers J."/>
            <person name="Rutter S."/>
            <person name="Seeger K."/>
            <person name="Skelton S."/>
            <person name="Squares S."/>
            <person name="Squares R."/>
            <person name="Sulston J.E."/>
            <person name="Taylor K."/>
            <person name="Whitehead S."/>
            <person name="Barrell B.G."/>
        </authorList>
    </citation>
    <scope>NUCLEOTIDE SEQUENCE [LARGE SCALE GENOMIC DNA]</scope>
    <source>
        <strain>ATCC 25618 / H37Rv</strain>
    </source>
</reference>
<reference key="2">
    <citation type="journal article" date="2007" name="Biol. Chem.">
        <title>Characterization of peptidyl-tRNA hydrolase encoded by open reading frame Rv1014c of Mycobacterium tuberculosis H37Rv.</title>
        <authorList>
            <person name="Bal N.C."/>
            <person name="Agrawal H."/>
            <person name="Meher A.K."/>
            <person name="Arora A."/>
        </authorList>
    </citation>
    <scope>FUNCTION</scope>
    <scope>CATALYTIC ACTIVITY</scope>
    <scope>BIOPHYSICOCHEMICAL PROPERTIES</scope>
    <scope>INDUCTION</scope>
    <scope>MUTAGENESIS OF ASN-12; HIS-22; 65-PRO--CYS-67; 67-CYS--ARG-74; ASP-95; GLY-102 AND CYS-166</scope>
    <source>
        <strain>ATCC 25618 / H37Rv</strain>
    </source>
</reference>
<reference key="3">
    <citation type="journal article" date="2011" name="Mol. Cell. Proteomics">
        <title>Proteogenomic analysis of Mycobacterium tuberculosis by high resolution mass spectrometry.</title>
        <authorList>
            <person name="Kelkar D.S."/>
            <person name="Kumar D."/>
            <person name="Kumar P."/>
            <person name="Balakrishnan L."/>
            <person name="Muthusamy B."/>
            <person name="Yadav A.K."/>
            <person name="Shrivastava P."/>
            <person name="Marimuthu A."/>
            <person name="Anand S."/>
            <person name="Sundaram H."/>
            <person name="Kingsbury R."/>
            <person name="Harsha H.C."/>
            <person name="Nair B."/>
            <person name="Prasad T.S."/>
            <person name="Chauhan D.S."/>
            <person name="Katoch K."/>
            <person name="Katoch V.M."/>
            <person name="Kumar P."/>
            <person name="Chaerkady R."/>
            <person name="Ramachandran S."/>
            <person name="Dash D."/>
            <person name="Pandey A."/>
        </authorList>
    </citation>
    <scope>IDENTIFICATION BY MASS SPECTROMETRY [LARGE SCALE ANALYSIS]</scope>
    <source>
        <strain>ATCC 25618 / H37Rv</strain>
    </source>
</reference>
<reference key="4">
    <citation type="journal article" date="2022" name="Microbiol. Spectr.">
        <title>A tRNA-Acetylating Toxin and Detoxifying Enzyme in Mycobacterium tuberculosis.</title>
        <authorList>
            <person name="Tomasi F.G."/>
            <person name="Hall A.M.J."/>
            <person name="Schweber J.T.P."/>
            <person name="Dulberger C.L."/>
            <person name="McGowen K."/>
            <person name="Liu Q."/>
            <person name="Fortune S.M."/>
            <person name="Helaine S."/>
            <person name="Rubin E.J."/>
        </authorList>
    </citation>
    <scope>FUNCTION</scope>
    <scope>CATALYTIC ACTIVITY</scope>
    <scope>DISRUPTION PHENOTYPE</scope>
    <source>
        <strain>ATCC 25618 / H37Rv</strain>
    </source>
</reference>
<reference key="5">
    <citation type="journal article" date="2023" name="MBio">
        <title>Peptidyl tRNA Hydrolase Is Required for Robust Prolyl-tRNA Turnover in Mycobacterium tuberculosis.</title>
        <authorList>
            <person name="Tomasi F.G."/>
            <person name="Schweber J.T.P."/>
            <person name="Kimura S."/>
            <person name="Zhu J."/>
            <person name="Cleghorn L.A.T."/>
            <person name="Davis S.H."/>
            <person name="Green S.R."/>
            <person name="Waldor M.K."/>
            <person name="Rubin E.J."/>
        </authorList>
    </citation>
    <scope>FUNCTION</scope>
    <scope>DISRUPTION PHENOTYPE</scope>
    <scope>BIOTECHNOLOGY</scope>
</reference>
<reference evidence="10 11 12" key="6">
    <citation type="journal article" date="2007" name="J. Mol. Biol.">
        <title>Structural plasticity and enzyme action: crystal structures of mycobacterium tuberculosis peptidyl-tRNA hydrolase.</title>
        <authorList>
            <person name="Selvaraj M."/>
            <person name="Roy S."/>
            <person name="Singh N.S."/>
            <person name="Sangeetha R."/>
            <person name="Varshney U."/>
            <person name="Vijayan M."/>
        </authorList>
    </citation>
    <scope>X-RAY CRYSTALLOGRAPHY (1.98 ANGSTROMS)</scope>
    <scope>SUBUNIT</scope>
</reference>
<reference evidence="13 14 15 16" key="7">
    <citation type="journal article" date="2012" name="Acta Crystallogr. F">
        <title>Structures of new crystal forms of Mycobacterium tuberculosis peptidyl-tRNA hydrolase and functionally important plasticity of the molecule.</title>
        <authorList>
            <person name="Selvaraj M."/>
            <person name="Ahmad R."/>
            <person name="Varshney U."/>
            <person name="Vijayan M."/>
        </authorList>
    </citation>
    <scope>X-RAY CRYSTALLOGRAPHY (2.3 ANGSTROMS)</scope>
    <scope>SUBUNIT</scope>
    <source>
        <strain>ATCC 25618 / H37Rv</strain>
    </source>
</reference>
<gene>
    <name evidence="1 7" type="primary">pth</name>
    <name type="ordered locus">Rv1014c</name>
    <name type="ORF">MTCY10G2.35</name>
</gene>
<proteinExistence type="evidence at protein level"/>
<sequence>MAEPLLVVGLGNPGANYARTRHNLGFVVADLLAARLGAKFKAHKRSGAEVATGRSAGRSLVLAKPRCYMNESGRQIGPLAKFYSVAPANIIVIHDDLDLEFGRIRLKIGGGEGGHNGLRSVVAALGTKDFQRVRIGIGRPPGRKDPAAFVLENFTPAERAEVPTICEQAADATELLIEQGMEPAQNRVHAW</sequence>
<feature type="chain" id="PRO_0000187780" description="Peptidyl-tRNA hydrolase">
    <location>
        <begin position="1"/>
        <end position="191"/>
    </location>
</feature>
<feature type="active site" description="Proton acceptor" evidence="1">
    <location>
        <position position="22"/>
    </location>
</feature>
<feature type="binding site" evidence="1">
    <location>
        <position position="17"/>
    </location>
    <ligand>
        <name>tRNA</name>
        <dbReference type="ChEBI" id="CHEBI:17843"/>
    </ligand>
</feature>
<feature type="binding site" evidence="1">
    <location>
        <position position="68"/>
    </location>
    <ligand>
        <name>tRNA</name>
        <dbReference type="ChEBI" id="CHEBI:17843"/>
    </ligand>
</feature>
<feature type="binding site" evidence="1">
    <location>
        <position position="70"/>
    </location>
    <ligand>
        <name>tRNA</name>
        <dbReference type="ChEBI" id="CHEBI:17843"/>
    </ligand>
</feature>
<feature type="binding site" evidence="1">
    <location>
        <position position="116"/>
    </location>
    <ligand>
        <name>tRNA</name>
        <dbReference type="ChEBI" id="CHEBI:17843"/>
    </ligand>
</feature>
<feature type="site" description="Discriminates between blocked and unblocked aminoacyl-tRNA" evidence="1">
    <location>
        <position position="12"/>
    </location>
</feature>
<feature type="site" description="Stabilizes the basic form of H active site to accept a proton" evidence="1">
    <location>
        <position position="95"/>
    </location>
</feature>
<feature type="mutagenesis site" description="Does not complement an E.coli temperature-sensitive (ts) mutation." evidence="2">
    <original>N</original>
    <variation>D</variation>
    <location>
        <position position="12"/>
    </location>
</feature>
<feature type="mutagenesis site" description="Does not complement an E.coli ts mutation." evidence="2">
    <original>H</original>
    <variation>N</variation>
    <location>
        <position position="22"/>
    </location>
</feature>
<feature type="mutagenesis site" description="Very weakly complements an E.coli ts mutation." evidence="2">
    <original>PRC</original>
    <variation>LRA</variation>
    <location>
        <begin position="65"/>
        <end position="67"/>
    </location>
</feature>
<feature type="mutagenesis site" description="Weakly complements an E.coli ts mutation." evidence="2">
    <original>CYMNESGR</original>
    <variation>SYMNESGH</variation>
    <location>
        <begin position="67"/>
        <end position="74"/>
    </location>
</feature>
<feature type="mutagenesis site" description="Does not complement an E.coli ts mutation." evidence="2">
    <original>D</original>
    <variation>N</variation>
    <location>
        <position position="95"/>
    </location>
</feature>
<feature type="mutagenesis site" description="Complements an E.coli ts mutation." evidence="2">
    <original>G</original>
    <variation>D</variation>
    <location>
        <position position="102"/>
    </location>
</feature>
<feature type="mutagenesis site" description="Complements an E.coli ts mutation." evidence="2">
    <original>C</original>
    <variation>A</variation>
    <location>
        <position position="166"/>
    </location>
</feature>
<feature type="strand" evidence="18">
    <location>
        <begin position="6"/>
        <end position="9"/>
    </location>
</feature>
<feature type="helix" evidence="18">
    <location>
        <begin position="15"/>
        <end position="17"/>
    </location>
</feature>
<feature type="helix" evidence="18">
    <location>
        <begin position="21"/>
        <end position="23"/>
    </location>
</feature>
<feature type="helix" evidence="18">
    <location>
        <begin position="24"/>
        <end position="35"/>
    </location>
</feature>
<feature type="strand" evidence="17">
    <location>
        <begin position="41"/>
        <end position="43"/>
    </location>
</feature>
<feature type="turn" evidence="18">
    <location>
        <begin position="44"/>
        <end position="46"/>
    </location>
</feature>
<feature type="strand" evidence="18">
    <location>
        <begin position="47"/>
        <end position="55"/>
    </location>
</feature>
<feature type="strand" evidence="18">
    <location>
        <begin position="58"/>
        <end position="64"/>
    </location>
</feature>
<feature type="helix" evidence="18">
    <location>
        <begin position="69"/>
        <end position="72"/>
    </location>
</feature>
<feature type="helix" evidence="18">
    <location>
        <begin position="73"/>
        <end position="83"/>
    </location>
</feature>
<feature type="helix" evidence="18">
    <location>
        <begin position="87"/>
        <end position="89"/>
    </location>
</feature>
<feature type="strand" evidence="18">
    <location>
        <begin position="90"/>
        <end position="96"/>
    </location>
</feature>
<feature type="strand" evidence="18">
    <location>
        <begin position="104"/>
        <end position="110"/>
    </location>
</feature>
<feature type="helix" evidence="18">
    <location>
        <begin position="116"/>
        <end position="125"/>
    </location>
</feature>
<feature type="strand" evidence="18">
    <location>
        <begin position="130"/>
        <end position="136"/>
    </location>
</feature>
<feature type="strand" evidence="17">
    <location>
        <begin position="142"/>
        <end position="144"/>
    </location>
</feature>
<feature type="helix" evidence="18">
    <location>
        <begin position="149"/>
        <end position="151"/>
    </location>
</feature>
<feature type="helix" evidence="18">
    <location>
        <begin position="156"/>
        <end position="159"/>
    </location>
</feature>
<feature type="helix" evidence="18">
    <location>
        <begin position="162"/>
        <end position="179"/>
    </location>
</feature>
<feature type="helix" evidence="18">
    <location>
        <begin position="181"/>
        <end position="188"/>
    </location>
</feature>
<organism>
    <name type="scientific">Mycobacterium tuberculosis (strain ATCC 25618 / H37Rv)</name>
    <dbReference type="NCBI Taxonomy" id="83332"/>
    <lineage>
        <taxon>Bacteria</taxon>
        <taxon>Bacillati</taxon>
        <taxon>Actinomycetota</taxon>
        <taxon>Actinomycetes</taxon>
        <taxon>Mycobacteriales</taxon>
        <taxon>Mycobacteriaceae</taxon>
        <taxon>Mycobacterium</taxon>
        <taxon>Mycobacterium tuberculosis complex</taxon>
    </lineage>
</organism>
<name>PTH_MYCTU</name>
<keyword id="KW-0002">3D-structure</keyword>
<keyword id="KW-0963">Cytoplasm</keyword>
<keyword id="KW-0378">Hydrolase</keyword>
<keyword id="KW-1185">Reference proteome</keyword>
<keyword id="KW-0694">RNA-binding</keyword>
<keyword id="KW-0820">tRNA-binding</keyword>
<protein>
    <recommendedName>
        <fullName evidence="1 7">Peptidyl-tRNA hydrolase</fullName>
        <shortName evidence="1 7">Pth</shortName>
        <ecNumber evidence="1 2">3.1.1.29</ecNumber>
    </recommendedName>
</protein>
<dbReference type="EC" id="3.1.1.29" evidence="1 2"/>
<dbReference type="EMBL" id="AL123456">
    <property type="protein sequence ID" value="CCP43764.1"/>
    <property type="molecule type" value="Genomic_DNA"/>
</dbReference>
<dbReference type="PIR" id="A70622">
    <property type="entry name" value="A70622"/>
</dbReference>
<dbReference type="RefSeq" id="NP_215530.1">
    <property type="nucleotide sequence ID" value="NC_000962.3"/>
</dbReference>
<dbReference type="RefSeq" id="WP_003405251.1">
    <property type="nucleotide sequence ID" value="NZ_NVQJ01000018.1"/>
</dbReference>
<dbReference type="PDB" id="2JRC">
    <property type="method" value="NMR"/>
    <property type="chains" value="A=1-191"/>
</dbReference>
<dbReference type="PDB" id="2Z2I">
    <property type="method" value="X-ray"/>
    <property type="resolution" value="1.98 A"/>
    <property type="chains" value="A=1-191"/>
</dbReference>
<dbReference type="PDB" id="2Z2J">
    <property type="method" value="X-ray"/>
    <property type="resolution" value="2.35 A"/>
    <property type="chains" value="A/B=1-191"/>
</dbReference>
<dbReference type="PDB" id="2Z2K">
    <property type="method" value="X-ray"/>
    <property type="resolution" value="2.50 A"/>
    <property type="chains" value="A=1-191"/>
</dbReference>
<dbReference type="PDB" id="3TCK">
    <property type="method" value="X-ray"/>
    <property type="resolution" value="2.30 A"/>
    <property type="chains" value="A=1-191"/>
</dbReference>
<dbReference type="PDB" id="3TCN">
    <property type="method" value="X-ray"/>
    <property type="resolution" value="2.30 A"/>
    <property type="chains" value="A/B=1-191"/>
</dbReference>
<dbReference type="PDB" id="3TD2">
    <property type="method" value="X-ray"/>
    <property type="resolution" value="2.50 A"/>
    <property type="chains" value="A=1-191"/>
</dbReference>
<dbReference type="PDB" id="3TD6">
    <property type="method" value="X-ray"/>
    <property type="resolution" value="3.20 A"/>
    <property type="chains" value="A=1-191"/>
</dbReference>
<dbReference type="PDB" id="7WT6">
    <property type="method" value="X-ray"/>
    <property type="resolution" value="1.94 A"/>
    <property type="chains" value="A=1-191"/>
</dbReference>
<dbReference type="PDBsum" id="2JRC"/>
<dbReference type="PDBsum" id="2Z2I"/>
<dbReference type="PDBsum" id="2Z2J"/>
<dbReference type="PDBsum" id="2Z2K"/>
<dbReference type="PDBsum" id="3TCK"/>
<dbReference type="PDBsum" id="3TCN"/>
<dbReference type="PDBsum" id="3TD2"/>
<dbReference type="PDBsum" id="3TD6"/>
<dbReference type="PDBsum" id="7WT6"/>
<dbReference type="SMR" id="P9WHN7"/>
<dbReference type="FunCoup" id="P9WHN7">
    <property type="interactions" value="253"/>
</dbReference>
<dbReference type="STRING" id="83332.Rv1014c"/>
<dbReference type="PaxDb" id="83332-Rv1014c"/>
<dbReference type="DNASU" id="886037"/>
<dbReference type="GeneID" id="45424985"/>
<dbReference type="GeneID" id="886037"/>
<dbReference type="KEGG" id="mtu:Rv1014c"/>
<dbReference type="KEGG" id="mtv:RVBD_1014c"/>
<dbReference type="TubercuList" id="Rv1014c"/>
<dbReference type="eggNOG" id="COG0193">
    <property type="taxonomic scope" value="Bacteria"/>
</dbReference>
<dbReference type="InParanoid" id="P9WHN7"/>
<dbReference type="OrthoDB" id="9800507at2"/>
<dbReference type="PhylomeDB" id="P9WHN7"/>
<dbReference type="BRENDA" id="3.1.1.29">
    <property type="organism ID" value="3445"/>
</dbReference>
<dbReference type="EvolutionaryTrace" id="P9WHN7"/>
<dbReference type="Proteomes" id="UP000001584">
    <property type="component" value="Chromosome"/>
</dbReference>
<dbReference type="GO" id="GO:0005737">
    <property type="term" value="C:cytoplasm"/>
    <property type="evidence" value="ECO:0007669"/>
    <property type="project" value="UniProtKB-SubCell"/>
</dbReference>
<dbReference type="GO" id="GO:0005886">
    <property type="term" value="C:plasma membrane"/>
    <property type="evidence" value="ECO:0007005"/>
    <property type="project" value="MTBBASE"/>
</dbReference>
<dbReference type="GO" id="GO:0004045">
    <property type="term" value="F:peptidyl-tRNA hydrolase activity"/>
    <property type="evidence" value="ECO:0000314"/>
    <property type="project" value="MTBBASE"/>
</dbReference>
<dbReference type="GO" id="GO:0000049">
    <property type="term" value="F:tRNA binding"/>
    <property type="evidence" value="ECO:0007669"/>
    <property type="project" value="UniProtKB-UniRule"/>
</dbReference>
<dbReference type="GO" id="GO:0006515">
    <property type="term" value="P:protein quality control for misfolded or incompletely synthesized proteins"/>
    <property type="evidence" value="ECO:0007669"/>
    <property type="project" value="UniProtKB-UniRule"/>
</dbReference>
<dbReference type="GO" id="GO:0072344">
    <property type="term" value="P:rescue of stalled ribosome"/>
    <property type="evidence" value="ECO:0007669"/>
    <property type="project" value="UniProtKB-UniRule"/>
</dbReference>
<dbReference type="CDD" id="cd00462">
    <property type="entry name" value="PTH"/>
    <property type="match status" value="1"/>
</dbReference>
<dbReference type="FunFam" id="3.40.50.1470:FF:000001">
    <property type="entry name" value="Peptidyl-tRNA hydrolase"/>
    <property type="match status" value="1"/>
</dbReference>
<dbReference type="Gene3D" id="3.40.50.1470">
    <property type="entry name" value="Peptidyl-tRNA hydrolase"/>
    <property type="match status" value="1"/>
</dbReference>
<dbReference type="HAMAP" id="MF_00083">
    <property type="entry name" value="Pept_tRNA_hydro_bact"/>
    <property type="match status" value="1"/>
</dbReference>
<dbReference type="InterPro" id="IPR001328">
    <property type="entry name" value="Pept_tRNA_hydro"/>
</dbReference>
<dbReference type="InterPro" id="IPR018171">
    <property type="entry name" value="Pept_tRNA_hydro_CS"/>
</dbReference>
<dbReference type="InterPro" id="IPR036416">
    <property type="entry name" value="Pept_tRNA_hydro_sf"/>
</dbReference>
<dbReference type="NCBIfam" id="TIGR00447">
    <property type="entry name" value="pth"/>
    <property type="match status" value="1"/>
</dbReference>
<dbReference type="PANTHER" id="PTHR17224">
    <property type="entry name" value="PEPTIDYL-TRNA HYDROLASE"/>
    <property type="match status" value="1"/>
</dbReference>
<dbReference type="PANTHER" id="PTHR17224:SF1">
    <property type="entry name" value="PEPTIDYL-TRNA HYDROLASE"/>
    <property type="match status" value="1"/>
</dbReference>
<dbReference type="Pfam" id="PF01195">
    <property type="entry name" value="Pept_tRNA_hydro"/>
    <property type="match status" value="1"/>
</dbReference>
<dbReference type="SUPFAM" id="SSF53178">
    <property type="entry name" value="Peptidyl-tRNA hydrolase-like"/>
    <property type="match status" value="1"/>
</dbReference>
<dbReference type="PROSITE" id="PS01195">
    <property type="entry name" value="PEPT_TRNA_HYDROL_1"/>
    <property type="match status" value="1"/>
</dbReference>
<dbReference type="PROSITE" id="PS01196">
    <property type="entry name" value="PEPT_TRNA_HYDROL_2"/>
    <property type="match status" value="1"/>
</dbReference>
<comment type="function">
    <text evidence="1 2 9">Hydrolyzes ribosome-free peptidyl-tRNAs (with 1 or more amino acids incorporated), which drop off the ribosome during protein synthesis, or as a result of ribosome stalling (PubMed:17516842, PubMed:36695586).</text>
</comment>
<comment type="function">
    <text evidence="1">Catalyzes the release of premature peptidyl moieties from peptidyl-tRNA molecules trapped in stalled 50S ribosomal subunits, and thus maintains levels of free tRNAs and 50S ribosomes.</text>
</comment>
<comment type="function">
    <text evidence="2 6 8">Important for recycling peptidyl-tRNA(Pro) that has dropped off during the incorporation of proline into a growing peptide (PubMed:36695586). Probably cleaves the acetyl group off acetylated aminoacylated-tRNA (produced by TacT for example) (Probable) (PubMed:35638832). Complements a temperature-sensitive pth mutation in E.coli (PubMed:17516842).</text>
</comment>
<comment type="catalytic activity">
    <reaction evidence="1 2">
        <text>an N-acyl-L-alpha-aminoacyl-tRNA + H2O = an N-acyl-L-amino acid + a tRNA + H(+)</text>
        <dbReference type="Rhea" id="RHEA:54448"/>
        <dbReference type="Rhea" id="RHEA-COMP:10123"/>
        <dbReference type="Rhea" id="RHEA-COMP:13883"/>
        <dbReference type="ChEBI" id="CHEBI:15377"/>
        <dbReference type="ChEBI" id="CHEBI:15378"/>
        <dbReference type="ChEBI" id="CHEBI:59874"/>
        <dbReference type="ChEBI" id="CHEBI:78442"/>
        <dbReference type="ChEBI" id="CHEBI:138191"/>
        <dbReference type="EC" id="3.1.1.29"/>
    </reaction>
</comment>
<comment type="catalytic activity">
    <reaction evidence="8">
        <text>N-acetylglycyl-tRNA(Gly) + H2O = N-acetylglycine + tRNA(Gly) + H(+)</text>
        <dbReference type="Rhea" id="RHEA:81979"/>
        <dbReference type="Rhea" id="RHEA-COMP:9664"/>
        <dbReference type="Rhea" id="RHEA-COMP:19766"/>
        <dbReference type="ChEBI" id="CHEBI:15377"/>
        <dbReference type="ChEBI" id="CHEBI:15378"/>
        <dbReference type="ChEBI" id="CHEBI:61887"/>
        <dbReference type="ChEBI" id="CHEBI:78442"/>
        <dbReference type="ChEBI" id="CHEBI:232036"/>
    </reaction>
</comment>
<comment type="biophysicochemical properties">
    <kinetics>
        <KM evidence="2">0.7 uM for diacetyl-lysyl-tRNA(Lys)</KM>
        <text evidence="2">kcat is 1.22 sec(-1).</text>
    </kinetics>
</comment>
<comment type="subunit">
    <text evidence="1 3 4">Monomer.</text>
</comment>
<comment type="subcellular location">
    <subcellularLocation>
        <location evidence="1">Cytoplasm</location>
    </subcellularLocation>
</comment>
<comment type="induction">
    <text evidence="2">Constitutively expressed (at protein level).</text>
</comment>
<comment type="disruption phenotype">
    <text evidence="5 6">Essential, it cannot be deleted (PubMed:35638832, PubMed:36695586). Depletion experiments lead to decreased growth (PubMed:35638832). Depletion experiments lead to accumulation of peptidyl tRNAs, in particular all 3 peptidyl-prolyl-tRNA(Pro)s, a reduction in usable aminoacyl tRNA pools and hypersensitivity to macrolide antibiotics that target the 50S subunit (PubMed:36695586).</text>
</comment>
<comment type="biotechnology">
    <text evidence="6">Might be a good antibiotic target especially in combination with antibiotics that targets 50S ribosmal subunits (macrolides) or target peptidyl tRNA drop off (lincosamide clindamycin and aminonucleoside puromycin).</text>
</comment>
<comment type="similarity">
    <text evidence="1">Belongs to the PTH family.</text>
</comment>
<accession>P9WHN7</accession>
<accession>L0T723</accession>
<accession>P65865</accession>
<accession>P96386</accession>